<gene>
    <name evidence="1" type="primary">rimP</name>
    <name type="ordered locus">Mkms_2125</name>
</gene>
<proteinExistence type="inferred from homology"/>
<organism>
    <name type="scientific">Mycobacterium sp. (strain KMS)</name>
    <dbReference type="NCBI Taxonomy" id="189918"/>
    <lineage>
        <taxon>Bacteria</taxon>
        <taxon>Bacillati</taxon>
        <taxon>Actinomycetota</taxon>
        <taxon>Actinomycetes</taxon>
        <taxon>Mycobacteriales</taxon>
        <taxon>Mycobacteriaceae</taxon>
        <taxon>Mycobacterium</taxon>
    </lineage>
</organism>
<name>RIMP_MYCSK</name>
<comment type="function">
    <text evidence="1">Required for maturation of 30S ribosomal subunits.</text>
</comment>
<comment type="subcellular location">
    <subcellularLocation>
        <location evidence="1">Cytoplasm</location>
    </subcellularLocation>
</comment>
<comment type="similarity">
    <text evidence="1">Belongs to the RimP family.</text>
</comment>
<reference key="1">
    <citation type="submission" date="2006-12" db="EMBL/GenBank/DDBJ databases">
        <title>Complete sequence of chromosome of Mycobacterium sp. KMS.</title>
        <authorList>
            <consortium name="US DOE Joint Genome Institute"/>
            <person name="Copeland A."/>
            <person name="Lucas S."/>
            <person name="Lapidus A."/>
            <person name="Barry K."/>
            <person name="Detter J.C."/>
            <person name="Glavina del Rio T."/>
            <person name="Hammon N."/>
            <person name="Israni S."/>
            <person name="Dalin E."/>
            <person name="Tice H."/>
            <person name="Pitluck S."/>
            <person name="Kiss H."/>
            <person name="Brettin T."/>
            <person name="Bruce D."/>
            <person name="Han C."/>
            <person name="Tapia R."/>
            <person name="Gilna P."/>
            <person name="Schmutz J."/>
            <person name="Larimer F."/>
            <person name="Land M."/>
            <person name="Hauser L."/>
            <person name="Kyrpides N."/>
            <person name="Mikhailova N."/>
            <person name="Miller C.D."/>
            <person name="Richardson P."/>
        </authorList>
    </citation>
    <scope>NUCLEOTIDE SEQUENCE [LARGE SCALE GENOMIC DNA]</scope>
    <source>
        <strain>KMS</strain>
    </source>
</reference>
<keyword id="KW-0963">Cytoplasm</keyword>
<keyword id="KW-0690">Ribosome biogenesis</keyword>
<sequence>MAPEPKLRPTGLPSQEQVKELLDGEFARAGYEIENVVIDGGARPPRITVVVDGDRPLDLDTVASLSRSASEQLDRVDESGPGVTADAATYVLEVTSPGVDRPLTTEKHYRRARGRKVELTLSDGSQLTGRIGALTADGESVSLVVREGARANFSVRELPLEGIVKAVVQVEFSPPSQRELELTGQPREEAGA</sequence>
<dbReference type="EMBL" id="CP000518">
    <property type="protein sequence ID" value="ABL91323.1"/>
    <property type="molecule type" value="Genomic_DNA"/>
</dbReference>
<dbReference type="SMR" id="A1UER5"/>
<dbReference type="STRING" id="189918.Mkms_2125"/>
<dbReference type="KEGG" id="mkm:Mkms_2125"/>
<dbReference type="HOGENOM" id="CLU_070525_3_0_11"/>
<dbReference type="OrthoDB" id="9805006at2"/>
<dbReference type="GO" id="GO:0005829">
    <property type="term" value="C:cytosol"/>
    <property type="evidence" value="ECO:0007669"/>
    <property type="project" value="TreeGrafter"/>
</dbReference>
<dbReference type="GO" id="GO:0000028">
    <property type="term" value="P:ribosomal small subunit assembly"/>
    <property type="evidence" value="ECO:0007669"/>
    <property type="project" value="TreeGrafter"/>
</dbReference>
<dbReference type="GO" id="GO:0006412">
    <property type="term" value="P:translation"/>
    <property type="evidence" value="ECO:0007669"/>
    <property type="project" value="TreeGrafter"/>
</dbReference>
<dbReference type="CDD" id="cd01734">
    <property type="entry name" value="YlxS_C"/>
    <property type="match status" value="1"/>
</dbReference>
<dbReference type="Gene3D" id="3.30.300.70">
    <property type="entry name" value="RimP-like superfamily, N-terminal"/>
    <property type="match status" value="1"/>
</dbReference>
<dbReference type="HAMAP" id="MF_01077">
    <property type="entry name" value="RimP"/>
    <property type="match status" value="1"/>
</dbReference>
<dbReference type="InterPro" id="IPR003728">
    <property type="entry name" value="Ribosome_maturation_RimP"/>
</dbReference>
<dbReference type="InterPro" id="IPR028998">
    <property type="entry name" value="RimP_C"/>
</dbReference>
<dbReference type="InterPro" id="IPR028989">
    <property type="entry name" value="RimP_N"/>
</dbReference>
<dbReference type="InterPro" id="IPR035956">
    <property type="entry name" value="RimP_N_sf"/>
</dbReference>
<dbReference type="NCBIfam" id="NF000930">
    <property type="entry name" value="PRK00092.2-2"/>
    <property type="match status" value="1"/>
</dbReference>
<dbReference type="PANTHER" id="PTHR33867">
    <property type="entry name" value="RIBOSOME MATURATION FACTOR RIMP"/>
    <property type="match status" value="1"/>
</dbReference>
<dbReference type="PANTHER" id="PTHR33867:SF1">
    <property type="entry name" value="RIBOSOME MATURATION FACTOR RIMP"/>
    <property type="match status" value="1"/>
</dbReference>
<dbReference type="Pfam" id="PF17384">
    <property type="entry name" value="DUF150_C"/>
    <property type="match status" value="1"/>
</dbReference>
<dbReference type="Pfam" id="PF02576">
    <property type="entry name" value="RimP_N"/>
    <property type="match status" value="1"/>
</dbReference>
<dbReference type="SUPFAM" id="SSF75420">
    <property type="entry name" value="YhbC-like, N-terminal domain"/>
    <property type="match status" value="1"/>
</dbReference>
<evidence type="ECO:0000255" key="1">
    <source>
        <dbReference type="HAMAP-Rule" id="MF_01077"/>
    </source>
</evidence>
<feature type="chain" id="PRO_0000384712" description="Ribosome maturation factor RimP">
    <location>
        <begin position="1"/>
        <end position="192"/>
    </location>
</feature>
<accession>A1UER5</accession>
<protein>
    <recommendedName>
        <fullName evidence="1">Ribosome maturation factor RimP</fullName>
    </recommendedName>
</protein>